<proteinExistence type="inferred from homology"/>
<dbReference type="EMBL" id="MDYM01000002">
    <property type="protein sequence ID" value="OQD68940.1"/>
    <property type="molecule type" value="Genomic_DNA"/>
</dbReference>
<dbReference type="STRING" id="60169.A0A1V6NWD3"/>
<dbReference type="OrthoDB" id="127083at5073"/>
<dbReference type="Proteomes" id="UP000191408">
    <property type="component" value="Unassembled WGS sequence"/>
</dbReference>
<dbReference type="GO" id="GO:0000785">
    <property type="term" value="C:chromatin"/>
    <property type="evidence" value="ECO:0007669"/>
    <property type="project" value="TreeGrafter"/>
</dbReference>
<dbReference type="GO" id="GO:0005634">
    <property type="term" value="C:nucleus"/>
    <property type="evidence" value="ECO:0007669"/>
    <property type="project" value="UniProtKB-SubCell"/>
</dbReference>
<dbReference type="GO" id="GO:0000981">
    <property type="term" value="F:DNA-binding transcription factor activity, RNA polymerase II-specific"/>
    <property type="evidence" value="ECO:0007669"/>
    <property type="project" value="InterPro"/>
</dbReference>
<dbReference type="GO" id="GO:0000978">
    <property type="term" value="F:RNA polymerase II cis-regulatory region sequence-specific DNA binding"/>
    <property type="evidence" value="ECO:0007669"/>
    <property type="project" value="InterPro"/>
</dbReference>
<dbReference type="GO" id="GO:0008270">
    <property type="term" value="F:zinc ion binding"/>
    <property type="evidence" value="ECO:0007669"/>
    <property type="project" value="UniProtKB-KW"/>
</dbReference>
<dbReference type="GO" id="GO:0006351">
    <property type="term" value="P:DNA-templated transcription"/>
    <property type="evidence" value="ECO:0007669"/>
    <property type="project" value="InterPro"/>
</dbReference>
<dbReference type="CDD" id="cd12148">
    <property type="entry name" value="fungal_TF_MHR"/>
    <property type="match status" value="1"/>
</dbReference>
<dbReference type="CDD" id="cd00067">
    <property type="entry name" value="GAL4"/>
    <property type="match status" value="1"/>
</dbReference>
<dbReference type="Gene3D" id="3.30.160.60">
    <property type="entry name" value="Classic Zinc Finger"/>
    <property type="match status" value="2"/>
</dbReference>
<dbReference type="Gene3D" id="4.10.240.10">
    <property type="entry name" value="Zn(2)-C6 fungal-type DNA-binding domain"/>
    <property type="match status" value="1"/>
</dbReference>
<dbReference type="InterPro" id="IPR007219">
    <property type="entry name" value="Transcription_factor_dom_fun"/>
</dbReference>
<dbReference type="InterPro" id="IPR051059">
    <property type="entry name" value="VerF-like"/>
</dbReference>
<dbReference type="InterPro" id="IPR036864">
    <property type="entry name" value="Zn2-C6_fun-type_DNA-bd_sf"/>
</dbReference>
<dbReference type="InterPro" id="IPR001138">
    <property type="entry name" value="Zn2Cys6_DnaBD"/>
</dbReference>
<dbReference type="InterPro" id="IPR036236">
    <property type="entry name" value="Znf_C2H2_sf"/>
</dbReference>
<dbReference type="InterPro" id="IPR013087">
    <property type="entry name" value="Znf_C2H2_type"/>
</dbReference>
<dbReference type="PANTHER" id="PTHR40626">
    <property type="entry name" value="MIP31509P"/>
    <property type="match status" value="1"/>
</dbReference>
<dbReference type="PANTHER" id="PTHR40626:SF3">
    <property type="entry name" value="TRANSCRIPTION FACTOR WITH C2H2 AND ZN(2)-CYS(6) DNA BINDING DOMAIN (EUROFUNG)-RELATED"/>
    <property type="match status" value="1"/>
</dbReference>
<dbReference type="Pfam" id="PF04082">
    <property type="entry name" value="Fungal_trans"/>
    <property type="match status" value="1"/>
</dbReference>
<dbReference type="Pfam" id="PF00172">
    <property type="entry name" value="Zn_clus"/>
    <property type="match status" value="1"/>
</dbReference>
<dbReference type="SMART" id="SM00066">
    <property type="entry name" value="GAL4"/>
    <property type="match status" value="1"/>
</dbReference>
<dbReference type="SMART" id="SM00355">
    <property type="entry name" value="ZnF_C2H2"/>
    <property type="match status" value="2"/>
</dbReference>
<dbReference type="SUPFAM" id="SSF57667">
    <property type="entry name" value="beta-beta-alpha zinc fingers"/>
    <property type="match status" value="1"/>
</dbReference>
<dbReference type="SUPFAM" id="SSF57701">
    <property type="entry name" value="Zn2/Cys6 DNA-binding domain"/>
    <property type="match status" value="1"/>
</dbReference>
<dbReference type="PROSITE" id="PS00028">
    <property type="entry name" value="ZINC_FINGER_C2H2_1"/>
    <property type="match status" value="1"/>
</dbReference>
<dbReference type="PROSITE" id="PS50157">
    <property type="entry name" value="ZINC_FINGER_C2H2_2"/>
    <property type="match status" value="2"/>
</dbReference>
<dbReference type="PROSITE" id="PS50048">
    <property type="entry name" value="ZN2_CY6_FUNGAL_2"/>
    <property type="match status" value="1"/>
</dbReference>
<feature type="chain" id="PRO_0000455373" description="Transcription factor verF">
    <location>
        <begin position="1"/>
        <end position="730"/>
    </location>
</feature>
<feature type="zinc finger region" description="C2H2-type 1" evidence="1">
    <location>
        <begin position="19"/>
        <end position="41"/>
    </location>
</feature>
<feature type="zinc finger region" description="C2H2-type 2; atypical" evidence="1">
    <location>
        <begin position="47"/>
        <end position="69"/>
    </location>
</feature>
<feature type="DNA-binding region" description="Zn(2)-C6 fungal-type" evidence="2">
    <location>
        <begin position="83"/>
        <end position="109"/>
    </location>
</feature>
<feature type="region of interest" description="Disordered" evidence="3">
    <location>
        <begin position="120"/>
        <end position="151"/>
    </location>
</feature>
<feature type="compositionally biased region" description="Polar residues" evidence="3">
    <location>
        <begin position="120"/>
        <end position="129"/>
    </location>
</feature>
<protein>
    <recommendedName>
        <fullName evidence="5">Transcription factor verF</fullName>
    </recommendedName>
    <alternativeName>
        <fullName evidence="5">Cluster 4 protein F</fullName>
    </alternativeName>
    <alternativeName>
        <fullName evidence="5">Verrucosidin biosynthesis cluster protein F</fullName>
    </alternativeName>
</protein>
<organism>
    <name type="scientific">Penicillium polonicum</name>
    <dbReference type="NCBI Taxonomy" id="60169"/>
    <lineage>
        <taxon>Eukaryota</taxon>
        <taxon>Fungi</taxon>
        <taxon>Dikarya</taxon>
        <taxon>Ascomycota</taxon>
        <taxon>Pezizomycotina</taxon>
        <taxon>Eurotiomycetes</taxon>
        <taxon>Eurotiomycetidae</taxon>
        <taxon>Eurotiales</taxon>
        <taxon>Aspergillaceae</taxon>
        <taxon>Penicillium</taxon>
    </lineage>
</organism>
<gene>
    <name evidence="5" type="primary">verF</name>
    <name evidence="5" type="synonym">cl4F</name>
    <name type="ORF">PENPOL_c002G07024</name>
</gene>
<reference key="1">
    <citation type="journal article" date="2017" name="Nat. Microbiol.">
        <title>Global analysis of biosynthetic gene clusters reveals vast potential of secondary metabolite production in Penicillium species.</title>
        <authorList>
            <person name="Nielsen J.C."/>
            <person name="Grijseels S."/>
            <person name="Prigent S."/>
            <person name="Ji B."/>
            <person name="Dainat J."/>
            <person name="Nielsen K.F."/>
            <person name="Frisvad J.C."/>
            <person name="Workman M."/>
            <person name="Nielsen J."/>
        </authorList>
    </citation>
    <scope>NUCLEOTIDE SEQUENCE [LARGE SCALE GENOMIC DNA]</scope>
    <source>
        <strain>IBT 4502</strain>
    </source>
</reference>
<reference key="2">
    <citation type="journal article" date="2021" name="Front. Microbiol.">
        <title>CRISPR-Cas9-Based Discovery of the Verrucosidin Biosynthesis Gene Cluster in Penicillium polonicum.</title>
        <authorList>
            <person name="Valente S."/>
            <person name="Piombo E."/>
            <person name="Schroeckh V."/>
            <person name="Meloni G.R."/>
            <person name="Heinekamp T."/>
            <person name="Brakhage A.A."/>
            <person name="Spadaro D."/>
        </authorList>
    </citation>
    <scope>FUNCTION</scope>
</reference>
<accession>A0A1V6NWD3</accession>
<evidence type="ECO:0000255" key="1">
    <source>
        <dbReference type="PROSITE-ProRule" id="PRU00042"/>
    </source>
</evidence>
<evidence type="ECO:0000255" key="2">
    <source>
        <dbReference type="PROSITE-ProRule" id="PRU00227"/>
    </source>
</evidence>
<evidence type="ECO:0000256" key="3">
    <source>
        <dbReference type="SAM" id="MobiDB-lite"/>
    </source>
</evidence>
<evidence type="ECO:0000269" key="4">
    <source>
    </source>
</evidence>
<evidence type="ECO:0000303" key="5">
    <source>
    </source>
</evidence>
<sequence length="730" mass="83492">MSTEYPLVGSPETSEYPKYECSLCLKRYKRREHLFRHIGSHTSQRPYQCNSCDGAFQRADVLKRHLRTCDGGASRASTRRRACDRCVRQKKACSSHQPCHSCAKKGAQCLYSTDTGYSSRLSQHSSTNHTPKDQELSTQFTNPPPPPSTSTFNTMMPWGLTMEDLQNFGTSPTNTFFDPASMQYTSPTLPDFSVLPFEGPATFETPVSSDPPRKSLHFLDKFTSNTGLVSSFDCGTHEQREQIAARLDQQILSELQQRIMSMPALGMDIPSPLIMENNSDTSSTSDLPLDWFNDPLSLKTHEILLLVEEVVTIKPRNSSVALDWSSTLRDACLQFFSPSNIRRFLGFYWAIWHPNVNFVHRPTFDMLAAKPTLLAAMALIGACVSPDMPDNEDARTWFNCVEEMVFIDDDFNSDLTYQYSGNIAIQRRKIQAVQAAYIVCLYQNWEGADASKSRIRRYRFATLVSTARDIGITAARHLNYSELGRHEFEWKEYEAREELIRLFTWIFLLDSAFVIFNNLPPRMVIKEIRMHMATPEACFQATTADECHHQLHLFLPARTLYWTTSFRGSFESLCKDDLSVNIRHLLATLGPLNLFALTSAIHSQIFQFRSAVGSFQLRAPIQNALSNWRDIWQLFSSTFPQGITPHMTIEDPHIQPEELWKRMGFFRYAPEYWLLAHLMADRLAVLGTSKPENELEPLDEGPLDPILNRYDQTSMRQVNDLIMGFQTFQI</sequence>
<comment type="function">
    <text evidence="4">Transcription factor; part of the gene cluster that mediates the biosynthesis of the neurotoxin verrucosidin, a methylated alpha-pyrone polyketide that inhibits oxidative phosphorylation in mitochondria and thereby causes neurological diseases.</text>
</comment>
<comment type="subcellular location">
    <subcellularLocation>
        <location evidence="2">Nucleus</location>
    </subcellularLocation>
</comment>
<keyword id="KW-0238">DNA-binding</keyword>
<keyword id="KW-0479">Metal-binding</keyword>
<keyword id="KW-0539">Nucleus</keyword>
<keyword id="KW-1185">Reference proteome</keyword>
<keyword id="KW-0677">Repeat</keyword>
<keyword id="KW-0804">Transcription</keyword>
<keyword id="KW-0805">Transcription regulation</keyword>
<keyword id="KW-0862">Zinc</keyword>
<keyword id="KW-0863">Zinc-finger</keyword>
<name>VERF_PENPO</name>